<keyword id="KW-0010">Activator</keyword>
<keyword id="KW-0217">Developmental protein</keyword>
<keyword id="KW-0221">Differentiation</keyword>
<keyword id="KW-0238">DNA-binding</keyword>
<keyword id="KW-0524">Neurogenesis</keyword>
<keyword id="KW-0539">Nucleus</keyword>
<keyword id="KW-1185">Reference proteome</keyword>
<keyword id="KW-0804">Transcription</keyword>
<keyword id="KW-0805">Transcription regulation</keyword>
<protein>
    <recommendedName>
        <fullName>Neurogenic differentiation factor 6</fullName>
        <shortName>NeuroD6</shortName>
    </recommendedName>
    <alternativeName>
        <fullName>Helix-loop-helix protein mATH-2</fullName>
        <shortName>mATH2</shortName>
    </alternativeName>
    <alternativeName>
        <fullName>Protein NEX-1</fullName>
    </alternativeName>
    <alternativeName>
        <fullName>Protein atonal homolog 2</fullName>
    </alternativeName>
</protein>
<accession>P48986</accession>
<proteinExistence type="evidence at transcript level"/>
<reference key="1">
    <citation type="journal article" date="1995" name="Eur. J. Biochem.">
        <title>MATH-2, a mammalian helix-loop-helix factor structurally related to the product of Drosophila proneural gene atonal, is specifically expressed in the nervous system.</title>
        <authorList>
            <person name="Shimizu C."/>
            <person name="Akazawa C."/>
            <person name="Nakanishi S."/>
            <person name="Kageyama R."/>
        </authorList>
    </citation>
    <scope>NUCLEOTIDE SEQUENCE [GENOMIC DNA]</scope>
    <source>
        <strain>129/J</strain>
    </source>
</reference>
<reference key="2">
    <citation type="journal article" date="1994" name="Mech. Dev.">
        <title>NEX-1: a novel brain-specific helix-loop-helix protein with autoregulation and sustained expression in mature cortical neurons.</title>
        <authorList>
            <person name="Bartholomae A."/>
            <person name="Nave K.-A."/>
        </authorList>
    </citation>
    <scope>NUCLEOTIDE SEQUENCE [MRNA]</scope>
    <source>
        <strain>C57BL/6J</strain>
        <tissue>Brain</tissue>
    </source>
</reference>
<dbReference type="EMBL" id="D44480">
    <property type="protein sequence ID" value="BAA07923.1"/>
    <property type="molecule type" value="Genomic_DNA"/>
</dbReference>
<dbReference type="EMBL" id="U29086">
    <property type="protein sequence ID" value="AAC14576.1"/>
    <property type="molecule type" value="mRNA"/>
</dbReference>
<dbReference type="CCDS" id="CCDS20168.1"/>
<dbReference type="PIR" id="I48682">
    <property type="entry name" value="I48682"/>
</dbReference>
<dbReference type="PIR" id="I57038">
    <property type="entry name" value="I57038"/>
</dbReference>
<dbReference type="RefSeq" id="NP_033847.1">
    <property type="nucleotide sequence ID" value="NM_009717.2"/>
</dbReference>
<dbReference type="SMR" id="P48986"/>
<dbReference type="FunCoup" id="P48986">
    <property type="interactions" value="1497"/>
</dbReference>
<dbReference type="STRING" id="10090.ENSMUSP00000047016"/>
<dbReference type="PhosphoSitePlus" id="P48986"/>
<dbReference type="jPOST" id="P48986"/>
<dbReference type="PaxDb" id="10090-ENSMUSP00000047016"/>
<dbReference type="ProteomicsDB" id="293534"/>
<dbReference type="Antibodypedia" id="12707">
    <property type="antibodies" value="184 antibodies from 30 providers"/>
</dbReference>
<dbReference type="DNASU" id="11922"/>
<dbReference type="Ensembl" id="ENSMUST00000044767.10">
    <property type="protein sequence ID" value="ENSMUSP00000047016.9"/>
    <property type="gene ID" value="ENSMUSG00000037984.10"/>
</dbReference>
<dbReference type="GeneID" id="11922"/>
<dbReference type="KEGG" id="mmu:11922"/>
<dbReference type="UCSC" id="uc009cav.2">
    <property type="organism name" value="mouse"/>
</dbReference>
<dbReference type="AGR" id="MGI:106593"/>
<dbReference type="CTD" id="63974"/>
<dbReference type="MGI" id="MGI:106593">
    <property type="gene designation" value="Neurod6"/>
</dbReference>
<dbReference type="VEuPathDB" id="HostDB:ENSMUSG00000037984"/>
<dbReference type="eggNOG" id="KOG3898">
    <property type="taxonomic scope" value="Eukaryota"/>
</dbReference>
<dbReference type="GeneTree" id="ENSGT00940000159827"/>
<dbReference type="HOGENOM" id="CLU_055134_1_0_1"/>
<dbReference type="InParanoid" id="P48986"/>
<dbReference type="OMA" id="FPYDFHL"/>
<dbReference type="OrthoDB" id="10039134at2759"/>
<dbReference type="PhylomeDB" id="P48986"/>
<dbReference type="TreeFam" id="TF315153"/>
<dbReference type="BioGRID-ORCS" id="11922">
    <property type="hits" value="1 hit in 77 CRISPR screens"/>
</dbReference>
<dbReference type="PRO" id="PR:P48986"/>
<dbReference type="Proteomes" id="UP000000589">
    <property type="component" value="Chromosome 6"/>
</dbReference>
<dbReference type="RNAct" id="P48986">
    <property type="molecule type" value="protein"/>
</dbReference>
<dbReference type="Bgee" id="ENSMUSG00000037984">
    <property type="expression patterns" value="Expressed in cortical plate and 98 other cell types or tissues"/>
</dbReference>
<dbReference type="ExpressionAtlas" id="P48986">
    <property type="expression patterns" value="baseline and differential"/>
</dbReference>
<dbReference type="GO" id="GO:0005634">
    <property type="term" value="C:nucleus"/>
    <property type="evidence" value="ECO:0007669"/>
    <property type="project" value="UniProtKB-SubCell"/>
</dbReference>
<dbReference type="GO" id="GO:0001228">
    <property type="term" value="F:DNA-binding transcription activator activity, RNA polymerase II-specific"/>
    <property type="evidence" value="ECO:0000314"/>
    <property type="project" value="NTNU_SB"/>
</dbReference>
<dbReference type="GO" id="GO:0046983">
    <property type="term" value="F:protein dimerization activity"/>
    <property type="evidence" value="ECO:0007669"/>
    <property type="project" value="InterPro"/>
</dbReference>
<dbReference type="GO" id="GO:0000978">
    <property type="term" value="F:RNA polymerase II cis-regulatory region sequence-specific DNA binding"/>
    <property type="evidence" value="ECO:0000314"/>
    <property type="project" value="NTNU_SB"/>
</dbReference>
<dbReference type="GO" id="GO:0030154">
    <property type="term" value="P:cell differentiation"/>
    <property type="evidence" value="ECO:0007669"/>
    <property type="project" value="UniProtKB-KW"/>
</dbReference>
<dbReference type="GO" id="GO:0021542">
    <property type="term" value="P:dentate gyrus development"/>
    <property type="evidence" value="ECO:0000316"/>
    <property type="project" value="MGI"/>
</dbReference>
<dbReference type="GO" id="GO:0045944">
    <property type="term" value="P:positive regulation of transcription by RNA polymerase II"/>
    <property type="evidence" value="ECO:0000314"/>
    <property type="project" value="NTNU_SB"/>
</dbReference>
<dbReference type="CDD" id="cd19722">
    <property type="entry name" value="bHLH_TS_NeuroD6_ATOH2"/>
    <property type="match status" value="1"/>
</dbReference>
<dbReference type="FunFam" id="4.10.280.10:FF:000006">
    <property type="entry name" value="Neurogenic differentiation factor"/>
    <property type="match status" value="1"/>
</dbReference>
<dbReference type="Gene3D" id="4.10.280.10">
    <property type="entry name" value="Helix-loop-helix DNA-binding domain"/>
    <property type="match status" value="1"/>
</dbReference>
<dbReference type="InterPro" id="IPR011598">
    <property type="entry name" value="bHLH_dom"/>
</dbReference>
<dbReference type="InterPro" id="IPR050359">
    <property type="entry name" value="bHLH_transcription_factors"/>
</dbReference>
<dbReference type="InterPro" id="IPR036638">
    <property type="entry name" value="HLH_DNA-bd_sf"/>
</dbReference>
<dbReference type="InterPro" id="IPR022575">
    <property type="entry name" value="NeuroD_DUF"/>
</dbReference>
<dbReference type="InterPro" id="IPR016637">
    <property type="entry name" value="TF_bHLH_NeuroD"/>
</dbReference>
<dbReference type="PANTHER" id="PTHR19290">
    <property type="entry name" value="BASIC HELIX-LOOP-HELIX PROTEIN NEUROGENIN-RELATED"/>
    <property type="match status" value="1"/>
</dbReference>
<dbReference type="PANTHER" id="PTHR19290:SF9">
    <property type="entry name" value="NEUROGENIC DIFFERENTIATION FACTOR 6"/>
    <property type="match status" value="1"/>
</dbReference>
<dbReference type="Pfam" id="PF00010">
    <property type="entry name" value="HLH"/>
    <property type="match status" value="1"/>
</dbReference>
<dbReference type="Pfam" id="PF12533">
    <property type="entry name" value="Neuro_bHLH"/>
    <property type="match status" value="1"/>
</dbReference>
<dbReference type="PIRSF" id="PIRSF015618">
    <property type="entry name" value="bHLH_NeuroD"/>
    <property type="match status" value="1"/>
</dbReference>
<dbReference type="SMART" id="SM00353">
    <property type="entry name" value="HLH"/>
    <property type="match status" value="1"/>
</dbReference>
<dbReference type="SUPFAM" id="SSF47459">
    <property type="entry name" value="HLH, helix-loop-helix DNA-binding domain"/>
    <property type="match status" value="1"/>
</dbReference>
<dbReference type="PROSITE" id="PS50888">
    <property type="entry name" value="BHLH"/>
    <property type="match status" value="1"/>
</dbReference>
<gene>
    <name type="primary">Neurod6</name>
    <name type="synonym">Ath2</name>
    <name type="synonym">Atoh2</name>
    <name type="synonym">Nex1</name>
</gene>
<organism>
    <name type="scientific">Mus musculus</name>
    <name type="common">Mouse</name>
    <dbReference type="NCBI Taxonomy" id="10090"/>
    <lineage>
        <taxon>Eukaryota</taxon>
        <taxon>Metazoa</taxon>
        <taxon>Chordata</taxon>
        <taxon>Craniata</taxon>
        <taxon>Vertebrata</taxon>
        <taxon>Euteleostomi</taxon>
        <taxon>Mammalia</taxon>
        <taxon>Eutheria</taxon>
        <taxon>Euarchontoglires</taxon>
        <taxon>Glires</taxon>
        <taxon>Rodentia</taxon>
        <taxon>Myomorpha</taxon>
        <taxon>Muroidea</taxon>
        <taxon>Muridae</taxon>
        <taxon>Murinae</taxon>
        <taxon>Mus</taxon>
        <taxon>Mus</taxon>
    </lineage>
</organism>
<sequence length="337" mass="38644">MLTLPFDESVVMPESQMCRKFARQCEDQKQIKKPESFPKQVVLRGKSIKRAPGEETEKEEEEEDREEEDENGLSRRRGLRKKKTTKLRLERVKFRRQEANARERNRMHGLNDALDNLRKVVPCYSKTQKLSKIETLRLAKNYIWALSEILRIGKRPDLLTFVQNLCKGLSQPTTNLVAGCLQLNARSFLMGQGGEAAHHTRSPYSTFYPPYHSPELATPPGHGTLDNSKSMKPYNYCSAYESFYESTSPECASPQFEGPLSPPPINYNGIFSLKQEETLDYGKNYNYGMHYCAVPPRGPLGQGAMFRLPTDSHFPYDLHLRSQSLTMQDELNAVFHN</sequence>
<feature type="chain" id="PRO_0000127394" description="Neurogenic differentiation factor 6">
    <location>
        <begin position="1"/>
        <end position="337"/>
    </location>
</feature>
<feature type="domain" description="bHLH" evidence="2">
    <location>
        <begin position="94"/>
        <end position="146"/>
    </location>
</feature>
<feature type="region of interest" description="Disordered" evidence="3">
    <location>
        <begin position="28"/>
        <end position="80"/>
    </location>
</feature>
<feature type="short sequence motif" description="Nuclear localization signal" evidence="1">
    <location>
        <begin position="80"/>
        <end position="86"/>
    </location>
</feature>
<feature type="compositionally biased region" description="Acidic residues" evidence="3">
    <location>
        <begin position="54"/>
        <end position="71"/>
    </location>
</feature>
<evidence type="ECO:0000255" key="1"/>
<evidence type="ECO:0000255" key="2">
    <source>
        <dbReference type="PROSITE-ProRule" id="PRU00981"/>
    </source>
</evidence>
<evidence type="ECO:0000256" key="3">
    <source>
        <dbReference type="SAM" id="MobiDB-lite"/>
    </source>
</evidence>
<evidence type="ECO:0000305" key="4"/>
<comment type="function">
    <text>Activates E box-dependent transcription in collaboration with TCF3/E47. May be a trans-acting factor involved in the development and maintenance of the mammalian nervous system. Transactivates the promoter of its own gene.</text>
</comment>
<comment type="subunit">
    <text>Efficient DNA binding requires dimerization with another bHLH protein.</text>
</comment>
<comment type="subcellular location">
    <subcellularLocation>
        <location evidence="4">Nucleus</location>
    </subcellularLocation>
</comment>
<comment type="tissue specificity">
    <text>Specific to the nervous system of both embryos and adults. Highest levels in the cortical plate of the cerebrum.</text>
</comment>
<name>NDF6_MOUSE</name>